<evidence type="ECO:0000250" key="1"/>
<evidence type="ECO:0000269" key="2">
    <source>
    </source>
</evidence>
<evidence type="ECO:0000269" key="3">
    <source>
    </source>
</evidence>
<evidence type="ECO:0000269" key="4">
    <source>
    </source>
</evidence>
<evidence type="ECO:0000269" key="5">
    <source>
    </source>
</evidence>
<evidence type="ECO:0000269" key="6">
    <source>
    </source>
</evidence>
<evidence type="ECO:0000305" key="7"/>
<organism>
    <name type="scientific">Xenopus laevis</name>
    <name type="common">African clawed frog</name>
    <dbReference type="NCBI Taxonomy" id="8355"/>
    <lineage>
        <taxon>Eukaryota</taxon>
        <taxon>Metazoa</taxon>
        <taxon>Chordata</taxon>
        <taxon>Craniata</taxon>
        <taxon>Vertebrata</taxon>
        <taxon>Euteleostomi</taxon>
        <taxon>Amphibia</taxon>
        <taxon>Batrachia</taxon>
        <taxon>Anura</taxon>
        <taxon>Pipoidea</taxon>
        <taxon>Pipidae</taxon>
        <taxon>Xenopodinae</taxon>
        <taxon>Xenopus</taxon>
        <taxon>Xenopus</taxon>
    </lineage>
</organism>
<protein>
    <recommendedName>
        <fullName>G2/mitotic-specific cyclin-B1</fullName>
    </recommendedName>
</protein>
<comment type="function">
    <text evidence="4">Essential for the control of the cell cycle at the G2/M (mitosis) transition.</text>
</comment>
<comment type="subunit">
    <text evidence="2 3 5">Interacts with the cdc2 protein kinase to form a serine/threonine kinase holoenzyme complex also known as maturation promoting factor (MPF). The cyclin subunit imparts substrate specificity to the complex. When not in a complex with cdc2, interacts with spdya. Interacts with nap1l1. Interacts with nanos1.</text>
</comment>
<comment type="subcellular location">
    <subcellularLocation>
        <location evidence="1">Cytoplasm</location>
        <location evidence="1">Cytoskeleton</location>
        <location evidence="1">Microtubule organizing center</location>
        <location evidence="1">Centrosome</location>
    </subcellularLocation>
    <subcellularLocation>
        <location evidence="6">Cytoplasm</location>
    </subcellularLocation>
    <subcellularLocation>
        <location evidence="6">Nucleus</location>
    </subcellularLocation>
</comment>
<comment type="developmental stage">
    <text evidence="4">Accumulates steadily during G2 and is abruptly destroyed at mitosis.</text>
</comment>
<comment type="similarity">
    <text evidence="7">Belongs to the cyclin family. Cyclin AB subfamily.</text>
</comment>
<feature type="chain" id="PRO_0000080354" description="G2/mitotic-specific cyclin-B1">
    <location>
        <begin position="1"/>
        <end position="397"/>
    </location>
</feature>
<proteinExistence type="evidence at protein level"/>
<name>CCNB1_XENLA</name>
<dbReference type="EMBL" id="J03166">
    <property type="protein sequence ID" value="AAA49696.1"/>
    <property type="molecule type" value="mRNA"/>
</dbReference>
<dbReference type="EMBL" id="BC088950">
    <property type="protein sequence ID" value="AAH88950.1"/>
    <property type="molecule type" value="mRNA"/>
</dbReference>
<dbReference type="PIR" id="A32370">
    <property type="entry name" value="A32370"/>
</dbReference>
<dbReference type="RefSeq" id="NP_001081266.1">
    <property type="nucleotide sequence ID" value="NM_001087797.1"/>
</dbReference>
<dbReference type="SMR" id="P13350"/>
<dbReference type="BioGRID" id="99081">
    <property type="interactions" value="1"/>
</dbReference>
<dbReference type="ELM" id="P13350"/>
<dbReference type="IntAct" id="P13350">
    <property type="interactions" value="1"/>
</dbReference>
<dbReference type="GeneID" id="397742"/>
<dbReference type="KEGG" id="xla:397742"/>
<dbReference type="AGR" id="Xenbase:XB-GENE-5736929"/>
<dbReference type="CTD" id="397742"/>
<dbReference type="Xenbase" id="XB-GENE-5736929">
    <property type="gene designation" value="ccnb1.2.S"/>
</dbReference>
<dbReference type="OMA" id="MATRNHR"/>
<dbReference type="OrthoDB" id="5590282at2759"/>
<dbReference type="Proteomes" id="UP000186698">
    <property type="component" value="Chromosome 4S"/>
</dbReference>
<dbReference type="Bgee" id="397742">
    <property type="expression patterns" value="Expressed in egg cell and 17 other cell types or tissues"/>
</dbReference>
<dbReference type="GO" id="GO:0005813">
    <property type="term" value="C:centrosome"/>
    <property type="evidence" value="ECO:0007669"/>
    <property type="project" value="UniProtKB-SubCell"/>
</dbReference>
<dbReference type="GO" id="GO:0097125">
    <property type="term" value="C:cyclin B1-CDK1 complex"/>
    <property type="evidence" value="ECO:0000318"/>
    <property type="project" value="GO_Central"/>
</dbReference>
<dbReference type="GO" id="GO:0005737">
    <property type="term" value="C:cytoplasm"/>
    <property type="evidence" value="ECO:0000318"/>
    <property type="project" value="GO_Central"/>
</dbReference>
<dbReference type="GO" id="GO:0005829">
    <property type="term" value="C:cytosol"/>
    <property type="evidence" value="ECO:0000304"/>
    <property type="project" value="Reactome"/>
</dbReference>
<dbReference type="GO" id="GO:0005815">
    <property type="term" value="C:microtubule organizing center"/>
    <property type="evidence" value="ECO:0000318"/>
    <property type="project" value="GO_Central"/>
</dbReference>
<dbReference type="GO" id="GO:0005634">
    <property type="term" value="C:nucleus"/>
    <property type="evidence" value="ECO:0000318"/>
    <property type="project" value="GO_Central"/>
</dbReference>
<dbReference type="GO" id="GO:0016538">
    <property type="term" value="F:cyclin-dependent protein serine/threonine kinase regulator activity"/>
    <property type="evidence" value="ECO:0000318"/>
    <property type="project" value="GO_Central"/>
</dbReference>
<dbReference type="GO" id="GO:0005113">
    <property type="term" value="F:patched binding"/>
    <property type="evidence" value="ECO:0000353"/>
    <property type="project" value="BHF-UCL"/>
</dbReference>
<dbReference type="GO" id="GO:0051301">
    <property type="term" value="P:cell division"/>
    <property type="evidence" value="ECO:0007669"/>
    <property type="project" value="UniProtKB-KW"/>
</dbReference>
<dbReference type="GO" id="GO:0000082">
    <property type="term" value="P:G1/S transition of mitotic cell cycle"/>
    <property type="evidence" value="ECO:0000318"/>
    <property type="project" value="GO_Central"/>
</dbReference>
<dbReference type="GO" id="GO:0007080">
    <property type="term" value="P:mitotic metaphase chromosome alignment"/>
    <property type="evidence" value="ECO:0000318"/>
    <property type="project" value="GO_Central"/>
</dbReference>
<dbReference type="CDD" id="cd20565">
    <property type="entry name" value="CYCLIN_CCNB1_rpt1"/>
    <property type="match status" value="1"/>
</dbReference>
<dbReference type="CDD" id="cd20569">
    <property type="entry name" value="CYCLIN_CCNB1_rpt2"/>
    <property type="match status" value="1"/>
</dbReference>
<dbReference type="FunFam" id="1.10.472.10:FF:000027">
    <property type="entry name" value="G2/mitotic-specific cyclin-B1"/>
    <property type="match status" value="1"/>
</dbReference>
<dbReference type="Gene3D" id="1.10.472.10">
    <property type="entry name" value="Cyclin-like"/>
    <property type="match status" value="2"/>
</dbReference>
<dbReference type="InterPro" id="IPR048026">
    <property type="entry name" value="CCNB1_first_cyclin-box"/>
</dbReference>
<dbReference type="InterPro" id="IPR039361">
    <property type="entry name" value="Cyclin"/>
</dbReference>
<dbReference type="InterPro" id="IPR013763">
    <property type="entry name" value="Cyclin-like_dom"/>
</dbReference>
<dbReference type="InterPro" id="IPR036915">
    <property type="entry name" value="Cyclin-like_sf"/>
</dbReference>
<dbReference type="InterPro" id="IPR046965">
    <property type="entry name" value="Cyclin_A/B-like"/>
</dbReference>
<dbReference type="InterPro" id="IPR004367">
    <property type="entry name" value="Cyclin_C-dom"/>
</dbReference>
<dbReference type="InterPro" id="IPR006671">
    <property type="entry name" value="Cyclin_N"/>
</dbReference>
<dbReference type="InterPro" id="IPR048258">
    <property type="entry name" value="Cyclins_cyclin-box"/>
</dbReference>
<dbReference type="PANTHER" id="PTHR10177">
    <property type="entry name" value="CYCLINS"/>
    <property type="match status" value="1"/>
</dbReference>
<dbReference type="Pfam" id="PF02984">
    <property type="entry name" value="Cyclin_C"/>
    <property type="match status" value="1"/>
</dbReference>
<dbReference type="Pfam" id="PF00134">
    <property type="entry name" value="Cyclin_N"/>
    <property type="match status" value="1"/>
</dbReference>
<dbReference type="PIRSF" id="PIRSF001771">
    <property type="entry name" value="Cyclin_A_B_D_E"/>
    <property type="match status" value="1"/>
</dbReference>
<dbReference type="SMART" id="SM00385">
    <property type="entry name" value="CYCLIN"/>
    <property type="match status" value="2"/>
</dbReference>
<dbReference type="SMART" id="SM01332">
    <property type="entry name" value="Cyclin_C"/>
    <property type="match status" value="1"/>
</dbReference>
<dbReference type="SUPFAM" id="SSF47954">
    <property type="entry name" value="Cyclin-like"/>
    <property type="match status" value="2"/>
</dbReference>
<dbReference type="PROSITE" id="PS00292">
    <property type="entry name" value="CYCLINS"/>
    <property type="match status" value="1"/>
</dbReference>
<gene>
    <name type="primary">ccnb1</name>
</gene>
<accession>P13350</accession>
<accession>Q5HZN2</accession>
<keyword id="KW-0131">Cell cycle</keyword>
<keyword id="KW-0132">Cell division</keyword>
<keyword id="KW-0195">Cyclin</keyword>
<keyword id="KW-0963">Cytoplasm</keyword>
<keyword id="KW-0206">Cytoskeleton</keyword>
<keyword id="KW-0498">Mitosis</keyword>
<keyword id="KW-0539">Nucleus</keyword>
<keyword id="KW-1185">Reference proteome</keyword>
<reference key="1">
    <citation type="journal article" date="1989" name="Cell">
        <title>Translation of cyclin mRNA is necessary for extracts of activated Xenopus eggs to enter mitosis.</title>
        <authorList>
            <person name="Minshull J."/>
            <person name="Blow J.J."/>
            <person name="Hunt T."/>
        </authorList>
    </citation>
    <scope>NUCLEOTIDE SEQUENCE [MRNA]</scope>
    <scope>FUNCTION</scope>
    <scope>DEVELOPMENTAL STAGE</scope>
</reference>
<reference key="2">
    <citation type="submission" date="2005-01" db="EMBL/GenBank/DDBJ databases">
        <authorList>
            <consortium name="NIH - Xenopus Gene Collection (XGC) project"/>
        </authorList>
    </citation>
    <scope>NUCLEOTIDE SEQUENCE [LARGE SCALE MRNA]</scope>
    <source>
        <tissue>Egg</tissue>
    </source>
</reference>
<reference key="3">
    <citation type="journal article" date="1995" name="J. Cell Biol.">
        <title>Members of the NAP/SET family of proteins interact specifically with B-type cyclins.</title>
        <authorList>
            <person name="Kellogg D.R."/>
            <person name="Kikuchi A."/>
            <person name="Fujii-Nakata T."/>
            <person name="Turck C.W."/>
            <person name="Murray A.W."/>
        </authorList>
    </citation>
    <scope>INTERACTION WITH NAP1L1</scope>
</reference>
<reference key="4">
    <citation type="journal article" date="1999" name="Genes Dev.">
        <title>A novel p34cdc2 binding and activating protein that is necessary and sufficient to trigger G2/M progression in Xenopus oocytes.</title>
        <authorList>
            <person name="Ferby I."/>
            <person name="Blazquez M."/>
            <person name="Palmer A."/>
            <person name="Eritja R."/>
            <person name="Nebreda A.R."/>
        </authorList>
    </citation>
    <scope>INTERACTION WITH SPDYA</scope>
    <source>
        <tissue>Oocyte</tissue>
    </source>
</reference>
<reference key="5">
    <citation type="journal article" date="1999" name="J. Cell Biol.">
        <title>Nuclear import of Cdk/cyclin complexes: identification of distinct mechanisms for import of Cdk2/cyclin E and Cdc2/cyclin B1.</title>
        <authorList>
            <person name="Moore J.D."/>
            <person name="Yang J."/>
            <person name="Truant R."/>
            <person name="Kornbluth S."/>
        </authorList>
    </citation>
    <scope>SUBCELLULAR LOCATION</scope>
</reference>
<reference key="6">
    <citation type="journal article" date="2011" name="Mech. Dev.">
        <title>Nanos1 functions as a translational repressor in the Xenopus germline.</title>
        <authorList>
            <person name="Lai F."/>
            <person name="Zhou Y."/>
            <person name="Luo X."/>
            <person name="Fox J."/>
            <person name="King M.L."/>
        </authorList>
    </citation>
    <scope>INTERACTION WITH NANOS1</scope>
</reference>
<sequence>MSLRVTRNMLANAENNVKTTLAGKRVVATKPGLRPRTALGDIGNKAEVKVPTKKELKPAVKAAKKAKPVDKLLEPLKVIEENVCPKPAQVEPSSPSPMETSGCLPDELCQAFSDVLIHVKDVDADDDGNPMLCSEYVKDIYAYLRSLEDAQAVRQNYLHGQEVTGNMRAILIDWLVQVQMKFRLLQETMFMTVGIIDRFLQEHPVPKNQLQLVGVTAMFLAAKYEEMYPPEIGDFTFVTDHTYTKAQIRDMEMKILRVLKFAIGRPLPLHFLRRASKIGEVTAEQHSLAKYLMELVMVDYDMVHFTPSQIAAASSCLSLKILNAGDWTPTLHHYMAYSEEDLVPVMQHMAKNIIKVNKGLTKHLTVKNKYASSKQMKISTIPQLRSDVVVEMARPLM</sequence>